<evidence type="ECO:0000255" key="1">
    <source>
        <dbReference type="HAMAP-Rule" id="MF_00041"/>
    </source>
</evidence>
<feature type="chain" id="PRO_1000090822" description="Cysteine--tRNA ligase">
    <location>
        <begin position="1"/>
        <end position="465"/>
    </location>
</feature>
<feature type="short sequence motif" description="'HIGH' region">
    <location>
        <begin position="32"/>
        <end position="42"/>
    </location>
</feature>
<feature type="short sequence motif" description="'KMSKS' region">
    <location>
        <begin position="271"/>
        <end position="275"/>
    </location>
</feature>
<feature type="binding site" evidence="1">
    <location>
        <position position="30"/>
    </location>
    <ligand>
        <name>Zn(2+)</name>
        <dbReference type="ChEBI" id="CHEBI:29105"/>
    </ligand>
</feature>
<feature type="binding site" evidence="1">
    <location>
        <position position="214"/>
    </location>
    <ligand>
        <name>Zn(2+)</name>
        <dbReference type="ChEBI" id="CHEBI:29105"/>
    </ligand>
</feature>
<feature type="binding site" evidence="1">
    <location>
        <position position="239"/>
    </location>
    <ligand>
        <name>Zn(2+)</name>
        <dbReference type="ChEBI" id="CHEBI:29105"/>
    </ligand>
</feature>
<feature type="binding site" evidence="1">
    <location>
        <position position="243"/>
    </location>
    <ligand>
        <name>Zn(2+)</name>
        <dbReference type="ChEBI" id="CHEBI:29105"/>
    </ligand>
</feature>
<feature type="binding site" evidence="1">
    <location>
        <position position="274"/>
    </location>
    <ligand>
        <name>ATP</name>
        <dbReference type="ChEBI" id="CHEBI:30616"/>
    </ligand>
</feature>
<accession>B1JUK8</accession>
<name>SYC_BURO0</name>
<reference key="1">
    <citation type="submission" date="2008-02" db="EMBL/GenBank/DDBJ databases">
        <title>Complete sequence of chromosome 1 of Burkholderia cenocepacia MC0-3.</title>
        <authorList>
            <person name="Copeland A."/>
            <person name="Lucas S."/>
            <person name="Lapidus A."/>
            <person name="Barry K."/>
            <person name="Bruce D."/>
            <person name="Goodwin L."/>
            <person name="Glavina del Rio T."/>
            <person name="Dalin E."/>
            <person name="Tice H."/>
            <person name="Pitluck S."/>
            <person name="Chain P."/>
            <person name="Malfatti S."/>
            <person name="Shin M."/>
            <person name="Vergez L."/>
            <person name="Schmutz J."/>
            <person name="Larimer F."/>
            <person name="Land M."/>
            <person name="Hauser L."/>
            <person name="Kyrpides N."/>
            <person name="Mikhailova N."/>
            <person name="Tiedje J."/>
            <person name="Richardson P."/>
        </authorList>
    </citation>
    <scope>NUCLEOTIDE SEQUENCE [LARGE SCALE GENOMIC DNA]</scope>
    <source>
        <strain>MC0-3</strain>
    </source>
</reference>
<gene>
    <name evidence="1" type="primary">cysS</name>
    <name type="ordered locus">Bcenmc03_2097</name>
</gene>
<protein>
    <recommendedName>
        <fullName evidence="1">Cysteine--tRNA ligase</fullName>
        <ecNumber evidence="1">6.1.1.16</ecNumber>
    </recommendedName>
    <alternativeName>
        <fullName evidence="1">Cysteinyl-tRNA synthetase</fullName>
        <shortName evidence="1">CysRS</shortName>
    </alternativeName>
</protein>
<dbReference type="EC" id="6.1.1.16" evidence="1"/>
<dbReference type="EMBL" id="CP000958">
    <property type="protein sequence ID" value="ACA91258.1"/>
    <property type="molecule type" value="Genomic_DNA"/>
</dbReference>
<dbReference type="RefSeq" id="WP_012328794.1">
    <property type="nucleotide sequence ID" value="NC_010508.1"/>
</dbReference>
<dbReference type="SMR" id="B1JUK8"/>
<dbReference type="GeneID" id="83048881"/>
<dbReference type="KEGG" id="bcm:Bcenmc03_2097"/>
<dbReference type="HOGENOM" id="CLU_013528_0_1_4"/>
<dbReference type="Proteomes" id="UP000002169">
    <property type="component" value="Chromosome 1"/>
</dbReference>
<dbReference type="GO" id="GO:0005829">
    <property type="term" value="C:cytosol"/>
    <property type="evidence" value="ECO:0007669"/>
    <property type="project" value="TreeGrafter"/>
</dbReference>
<dbReference type="GO" id="GO:0005524">
    <property type="term" value="F:ATP binding"/>
    <property type="evidence" value="ECO:0007669"/>
    <property type="project" value="UniProtKB-UniRule"/>
</dbReference>
<dbReference type="GO" id="GO:0004817">
    <property type="term" value="F:cysteine-tRNA ligase activity"/>
    <property type="evidence" value="ECO:0007669"/>
    <property type="project" value="UniProtKB-UniRule"/>
</dbReference>
<dbReference type="GO" id="GO:0008270">
    <property type="term" value="F:zinc ion binding"/>
    <property type="evidence" value="ECO:0007669"/>
    <property type="project" value="UniProtKB-UniRule"/>
</dbReference>
<dbReference type="GO" id="GO:0006423">
    <property type="term" value="P:cysteinyl-tRNA aminoacylation"/>
    <property type="evidence" value="ECO:0007669"/>
    <property type="project" value="UniProtKB-UniRule"/>
</dbReference>
<dbReference type="CDD" id="cd07963">
    <property type="entry name" value="Anticodon_Ia_Cys"/>
    <property type="match status" value="1"/>
</dbReference>
<dbReference type="CDD" id="cd00672">
    <property type="entry name" value="CysRS_core"/>
    <property type="match status" value="1"/>
</dbReference>
<dbReference type="FunFam" id="3.40.50.620:FF:000009">
    <property type="entry name" value="Cysteine--tRNA ligase"/>
    <property type="match status" value="1"/>
</dbReference>
<dbReference type="Gene3D" id="1.20.120.1910">
    <property type="entry name" value="Cysteine-tRNA ligase, C-terminal anti-codon recognition domain"/>
    <property type="match status" value="1"/>
</dbReference>
<dbReference type="Gene3D" id="3.40.50.620">
    <property type="entry name" value="HUPs"/>
    <property type="match status" value="1"/>
</dbReference>
<dbReference type="HAMAP" id="MF_00041">
    <property type="entry name" value="Cys_tRNA_synth"/>
    <property type="match status" value="1"/>
</dbReference>
<dbReference type="InterPro" id="IPR015803">
    <property type="entry name" value="Cys-tRNA-ligase"/>
</dbReference>
<dbReference type="InterPro" id="IPR015273">
    <property type="entry name" value="Cys-tRNA-synt_Ia_DALR"/>
</dbReference>
<dbReference type="InterPro" id="IPR024909">
    <property type="entry name" value="Cys-tRNA/MSH_ligase"/>
</dbReference>
<dbReference type="InterPro" id="IPR056411">
    <property type="entry name" value="CysS_C"/>
</dbReference>
<dbReference type="InterPro" id="IPR014729">
    <property type="entry name" value="Rossmann-like_a/b/a_fold"/>
</dbReference>
<dbReference type="InterPro" id="IPR032678">
    <property type="entry name" value="tRNA-synt_1_cat_dom"/>
</dbReference>
<dbReference type="InterPro" id="IPR009080">
    <property type="entry name" value="tRNAsynth_Ia_anticodon-bd"/>
</dbReference>
<dbReference type="NCBIfam" id="TIGR00435">
    <property type="entry name" value="cysS"/>
    <property type="match status" value="1"/>
</dbReference>
<dbReference type="PANTHER" id="PTHR10890:SF3">
    <property type="entry name" value="CYSTEINE--TRNA LIGASE, CYTOPLASMIC"/>
    <property type="match status" value="1"/>
</dbReference>
<dbReference type="PANTHER" id="PTHR10890">
    <property type="entry name" value="CYSTEINYL-TRNA SYNTHETASE"/>
    <property type="match status" value="1"/>
</dbReference>
<dbReference type="Pfam" id="PF23493">
    <property type="entry name" value="CysS_C"/>
    <property type="match status" value="1"/>
</dbReference>
<dbReference type="Pfam" id="PF09190">
    <property type="entry name" value="DALR_2"/>
    <property type="match status" value="1"/>
</dbReference>
<dbReference type="Pfam" id="PF01406">
    <property type="entry name" value="tRNA-synt_1e"/>
    <property type="match status" value="1"/>
</dbReference>
<dbReference type="PRINTS" id="PR00983">
    <property type="entry name" value="TRNASYNTHCYS"/>
</dbReference>
<dbReference type="SMART" id="SM00840">
    <property type="entry name" value="DALR_2"/>
    <property type="match status" value="1"/>
</dbReference>
<dbReference type="SUPFAM" id="SSF47323">
    <property type="entry name" value="Anticodon-binding domain of a subclass of class I aminoacyl-tRNA synthetases"/>
    <property type="match status" value="1"/>
</dbReference>
<dbReference type="SUPFAM" id="SSF52374">
    <property type="entry name" value="Nucleotidylyl transferase"/>
    <property type="match status" value="1"/>
</dbReference>
<keyword id="KW-0030">Aminoacyl-tRNA synthetase</keyword>
<keyword id="KW-0067">ATP-binding</keyword>
<keyword id="KW-0963">Cytoplasm</keyword>
<keyword id="KW-0436">Ligase</keyword>
<keyword id="KW-0479">Metal-binding</keyword>
<keyword id="KW-0547">Nucleotide-binding</keyword>
<keyword id="KW-0648">Protein biosynthesis</keyword>
<keyword id="KW-0862">Zinc</keyword>
<organism>
    <name type="scientific">Burkholderia orbicola (strain MC0-3)</name>
    <dbReference type="NCBI Taxonomy" id="406425"/>
    <lineage>
        <taxon>Bacteria</taxon>
        <taxon>Pseudomonadati</taxon>
        <taxon>Pseudomonadota</taxon>
        <taxon>Betaproteobacteria</taxon>
        <taxon>Burkholderiales</taxon>
        <taxon>Burkholderiaceae</taxon>
        <taxon>Burkholderia</taxon>
        <taxon>Burkholderia cepacia complex</taxon>
        <taxon>Burkholderia orbicola</taxon>
    </lineage>
</organism>
<comment type="catalytic activity">
    <reaction evidence="1">
        <text>tRNA(Cys) + L-cysteine + ATP = L-cysteinyl-tRNA(Cys) + AMP + diphosphate</text>
        <dbReference type="Rhea" id="RHEA:17773"/>
        <dbReference type="Rhea" id="RHEA-COMP:9661"/>
        <dbReference type="Rhea" id="RHEA-COMP:9679"/>
        <dbReference type="ChEBI" id="CHEBI:30616"/>
        <dbReference type="ChEBI" id="CHEBI:33019"/>
        <dbReference type="ChEBI" id="CHEBI:35235"/>
        <dbReference type="ChEBI" id="CHEBI:78442"/>
        <dbReference type="ChEBI" id="CHEBI:78517"/>
        <dbReference type="ChEBI" id="CHEBI:456215"/>
        <dbReference type="EC" id="6.1.1.16"/>
    </reaction>
</comment>
<comment type="cofactor">
    <cofactor evidence="1">
        <name>Zn(2+)</name>
        <dbReference type="ChEBI" id="CHEBI:29105"/>
    </cofactor>
    <text evidence="1">Binds 1 zinc ion per subunit.</text>
</comment>
<comment type="subunit">
    <text evidence="1">Monomer.</text>
</comment>
<comment type="subcellular location">
    <subcellularLocation>
        <location evidence="1">Cytoplasm</location>
    </subcellularLocation>
</comment>
<comment type="similarity">
    <text evidence="1">Belongs to the class-I aminoacyl-tRNA synthetase family.</text>
</comment>
<proteinExistence type="inferred from homology"/>
<sequence>MESLRIYNTLARDKQVFVPRQPGEVRMYVCGITVYDYCHVGHARMLVVFDLVQRWLRAIGYRVTYVRNITDIDDKIIRRAVENGETIKSLTDRFIGAMHEDETALGIQRPDVEPRATQFIPQMLGMIETLETNGYAYQAADGDVNYSVRKFADYGKLSGKSLDDLRAGERVAANDAKQDPLDFVLWKRAKEDEPEGASWASKYGMGRPGWHIECSAMGCSLLGNHFDIHGGGQDLQFPHHENEIAQSEGATGETFVNYWMHNGFVQVDNEKMSKSLGNFFTIREVLERYDAEVVRFFIVRTHYRSPLNYSDVHLDDARASLTRLYTALKDVEPDTLALDWNEPHGQRFAAAMNDDFNTPVAVATLFELAGEVNRTRDASLARQLKQLAGLLGLLGREPRAFLQQASGAAQAGGLAADEIEAQIAARVAAKQAKDYAEADRIRAELLEAGIALEDKPGGSTEWRRV</sequence>